<accession>A1WFG9</accession>
<sequence>MNQVEIYTDGACKGNPGPGGWGVLLRSGPTEKALFGGALGTTNNRMELMAVIEALSALQRPCAVTLYLDSEYVRKGITEWIHGWKAKGWRTAARQPVKNVDLWQRLDALVSTGGHRIEWRWVKGHSGDPGNERADALANRGVDQALGRGALASAE</sequence>
<name>RNH_VEREI</name>
<feature type="chain" id="PRO_0000332687" description="Ribonuclease H">
    <location>
        <begin position="1"/>
        <end position="155"/>
    </location>
</feature>
<feature type="domain" description="RNase H type-1" evidence="2">
    <location>
        <begin position="1"/>
        <end position="143"/>
    </location>
</feature>
<feature type="binding site" evidence="1">
    <location>
        <position position="9"/>
    </location>
    <ligand>
        <name>Mg(2+)</name>
        <dbReference type="ChEBI" id="CHEBI:18420"/>
        <label>1</label>
    </ligand>
</feature>
<feature type="binding site" evidence="1">
    <location>
        <position position="9"/>
    </location>
    <ligand>
        <name>Mg(2+)</name>
        <dbReference type="ChEBI" id="CHEBI:18420"/>
        <label>2</label>
    </ligand>
</feature>
<feature type="binding site" evidence="1">
    <location>
        <position position="47"/>
    </location>
    <ligand>
        <name>Mg(2+)</name>
        <dbReference type="ChEBI" id="CHEBI:18420"/>
        <label>1</label>
    </ligand>
</feature>
<feature type="binding site" evidence="1">
    <location>
        <position position="69"/>
    </location>
    <ligand>
        <name>Mg(2+)</name>
        <dbReference type="ChEBI" id="CHEBI:18420"/>
        <label>1</label>
    </ligand>
</feature>
<feature type="binding site" evidence="1">
    <location>
        <position position="135"/>
    </location>
    <ligand>
        <name>Mg(2+)</name>
        <dbReference type="ChEBI" id="CHEBI:18420"/>
        <label>2</label>
    </ligand>
</feature>
<organism>
    <name type="scientific">Verminephrobacter eiseniae (strain EF01-2)</name>
    <dbReference type="NCBI Taxonomy" id="391735"/>
    <lineage>
        <taxon>Bacteria</taxon>
        <taxon>Pseudomonadati</taxon>
        <taxon>Pseudomonadota</taxon>
        <taxon>Betaproteobacteria</taxon>
        <taxon>Burkholderiales</taxon>
        <taxon>Comamonadaceae</taxon>
        <taxon>Verminephrobacter</taxon>
    </lineage>
</organism>
<proteinExistence type="inferred from homology"/>
<reference key="1">
    <citation type="submission" date="2006-12" db="EMBL/GenBank/DDBJ databases">
        <title>Complete sequence of chromosome 1 of Verminephrobacter eiseniae EF01-2.</title>
        <authorList>
            <person name="Copeland A."/>
            <person name="Lucas S."/>
            <person name="Lapidus A."/>
            <person name="Barry K."/>
            <person name="Detter J.C."/>
            <person name="Glavina del Rio T."/>
            <person name="Dalin E."/>
            <person name="Tice H."/>
            <person name="Pitluck S."/>
            <person name="Chertkov O."/>
            <person name="Brettin T."/>
            <person name="Bruce D."/>
            <person name="Han C."/>
            <person name="Tapia R."/>
            <person name="Gilna P."/>
            <person name="Schmutz J."/>
            <person name="Larimer F."/>
            <person name="Land M."/>
            <person name="Hauser L."/>
            <person name="Kyrpides N."/>
            <person name="Kim E."/>
            <person name="Stahl D."/>
            <person name="Richardson P."/>
        </authorList>
    </citation>
    <scope>NUCLEOTIDE SEQUENCE [LARGE SCALE GENOMIC DNA]</scope>
    <source>
        <strain>EF01-2</strain>
    </source>
</reference>
<keyword id="KW-0963">Cytoplasm</keyword>
<keyword id="KW-0255">Endonuclease</keyword>
<keyword id="KW-0378">Hydrolase</keyword>
<keyword id="KW-0460">Magnesium</keyword>
<keyword id="KW-0479">Metal-binding</keyword>
<keyword id="KW-0540">Nuclease</keyword>
<keyword id="KW-1185">Reference proteome</keyword>
<evidence type="ECO:0000255" key="1">
    <source>
        <dbReference type="HAMAP-Rule" id="MF_00042"/>
    </source>
</evidence>
<evidence type="ECO:0000255" key="2">
    <source>
        <dbReference type="PROSITE-ProRule" id="PRU00408"/>
    </source>
</evidence>
<gene>
    <name evidence="1" type="primary">rnhA</name>
    <name type="ordered locus">Veis_0593</name>
</gene>
<protein>
    <recommendedName>
        <fullName evidence="1">Ribonuclease H</fullName>
        <shortName evidence="1">RNase H</shortName>
        <ecNumber evidence="1">3.1.26.4</ecNumber>
    </recommendedName>
</protein>
<comment type="function">
    <text evidence="1">Endonuclease that specifically degrades the RNA of RNA-DNA hybrids.</text>
</comment>
<comment type="catalytic activity">
    <reaction evidence="1">
        <text>Endonucleolytic cleavage to 5'-phosphomonoester.</text>
        <dbReference type="EC" id="3.1.26.4"/>
    </reaction>
</comment>
<comment type="cofactor">
    <cofactor evidence="1">
        <name>Mg(2+)</name>
        <dbReference type="ChEBI" id="CHEBI:18420"/>
    </cofactor>
    <text evidence="1">Binds 1 Mg(2+) ion per subunit. May bind a second metal ion at a regulatory site, or after substrate binding.</text>
</comment>
<comment type="subunit">
    <text evidence="1">Monomer.</text>
</comment>
<comment type="subcellular location">
    <subcellularLocation>
        <location evidence="1">Cytoplasm</location>
    </subcellularLocation>
</comment>
<comment type="similarity">
    <text evidence="1">Belongs to the RNase H family.</text>
</comment>
<dbReference type="EC" id="3.1.26.4" evidence="1"/>
<dbReference type="EMBL" id="CP000542">
    <property type="protein sequence ID" value="ABM56376.1"/>
    <property type="molecule type" value="Genomic_DNA"/>
</dbReference>
<dbReference type="RefSeq" id="WP_011808390.1">
    <property type="nucleotide sequence ID" value="NC_008786.1"/>
</dbReference>
<dbReference type="SMR" id="A1WFG9"/>
<dbReference type="STRING" id="391735.Veis_0593"/>
<dbReference type="GeneID" id="76459295"/>
<dbReference type="KEGG" id="vei:Veis_0593"/>
<dbReference type="eggNOG" id="COG0328">
    <property type="taxonomic scope" value="Bacteria"/>
</dbReference>
<dbReference type="HOGENOM" id="CLU_030894_6_0_4"/>
<dbReference type="OrthoDB" id="7845843at2"/>
<dbReference type="Proteomes" id="UP000000374">
    <property type="component" value="Chromosome"/>
</dbReference>
<dbReference type="GO" id="GO:0005737">
    <property type="term" value="C:cytoplasm"/>
    <property type="evidence" value="ECO:0007669"/>
    <property type="project" value="UniProtKB-SubCell"/>
</dbReference>
<dbReference type="GO" id="GO:0000287">
    <property type="term" value="F:magnesium ion binding"/>
    <property type="evidence" value="ECO:0007669"/>
    <property type="project" value="UniProtKB-UniRule"/>
</dbReference>
<dbReference type="GO" id="GO:0003676">
    <property type="term" value="F:nucleic acid binding"/>
    <property type="evidence" value="ECO:0007669"/>
    <property type="project" value="InterPro"/>
</dbReference>
<dbReference type="GO" id="GO:0004523">
    <property type="term" value="F:RNA-DNA hybrid ribonuclease activity"/>
    <property type="evidence" value="ECO:0007669"/>
    <property type="project" value="UniProtKB-UniRule"/>
</dbReference>
<dbReference type="GO" id="GO:0043137">
    <property type="term" value="P:DNA replication, removal of RNA primer"/>
    <property type="evidence" value="ECO:0007669"/>
    <property type="project" value="TreeGrafter"/>
</dbReference>
<dbReference type="CDD" id="cd09278">
    <property type="entry name" value="RNase_HI_prokaryote_like"/>
    <property type="match status" value="1"/>
</dbReference>
<dbReference type="FunFam" id="3.30.420.10:FF:000089">
    <property type="entry name" value="Ribonuclease H"/>
    <property type="match status" value="1"/>
</dbReference>
<dbReference type="Gene3D" id="3.30.420.10">
    <property type="entry name" value="Ribonuclease H-like superfamily/Ribonuclease H"/>
    <property type="match status" value="1"/>
</dbReference>
<dbReference type="HAMAP" id="MF_00042">
    <property type="entry name" value="RNase_H"/>
    <property type="match status" value="1"/>
</dbReference>
<dbReference type="InterPro" id="IPR050092">
    <property type="entry name" value="RNase_H"/>
</dbReference>
<dbReference type="InterPro" id="IPR012337">
    <property type="entry name" value="RNaseH-like_sf"/>
</dbReference>
<dbReference type="InterPro" id="IPR002156">
    <property type="entry name" value="RNaseH_domain"/>
</dbReference>
<dbReference type="InterPro" id="IPR036397">
    <property type="entry name" value="RNaseH_sf"/>
</dbReference>
<dbReference type="InterPro" id="IPR022892">
    <property type="entry name" value="RNaseHI"/>
</dbReference>
<dbReference type="NCBIfam" id="NF001236">
    <property type="entry name" value="PRK00203.1"/>
    <property type="match status" value="1"/>
</dbReference>
<dbReference type="PANTHER" id="PTHR10642">
    <property type="entry name" value="RIBONUCLEASE H1"/>
    <property type="match status" value="1"/>
</dbReference>
<dbReference type="PANTHER" id="PTHR10642:SF26">
    <property type="entry name" value="RIBONUCLEASE H1"/>
    <property type="match status" value="1"/>
</dbReference>
<dbReference type="Pfam" id="PF00075">
    <property type="entry name" value="RNase_H"/>
    <property type="match status" value="1"/>
</dbReference>
<dbReference type="SUPFAM" id="SSF53098">
    <property type="entry name" value="Ribonuclease H-like"/>
    <property type="match status" value="1"/>
</dbReference>
<dbReference type="PROSITE" id="PS50879">
    <property type="entry name" value="RNASE_H_1"/>
    <property type="match status" value="1"/>
</dbReference>